<evidence type="ECO:0000269" key="1">
    <source>
    </source>
</evidence>
<evidence type="ECO:0000303" key="2">
    <source>
    </source>
</evidence>
<evidence type="ECO:0000305" key="3"/>
<evidence type="ECO:0000305" key="4">
    <source>
    </source>
</evidence>
<evidence type="ECO:0007744" key="5">
    <source>
        <dbReference type="PDB" id="7PZY"/>
    </source>
</evidence>
<evidence type="ECO:0007744" key="6">
    <source>
        <dbReference type="PDB" id="7Q0F"/>
    </source>
</evidence>
<evidence type="ECO:0007744" key="7">
    <source>
        <dbReference type="PDB" id="7Q0P"/>
    </source>
</evidence>
<dbReference type="EMBL" id="CP017624">
    <property type="protein sequence ID" value="AOW27556.1"/>
    <property type="molecule type" value="Genomic_DNA"/>
</dbReference>
<dbReference type="RefSeq" id="XP_019330776.1">
    <property type="nucleotide sequence ID" value="XM_019475231.1"/>
</dbReference>
<dbReference type="PDB" id="7PZY">
    <property type="method" value="EM"/>
    <property type="resolution" value="2.32 A"/>
    <property type="chains" value="AE=1-112"/>
</dbReference>
<dbReference type="PDB" id="7Q08">
    <property type="method" value="EM"/>
    <property type="resolution" value="2.56 A"/>
    <property type="chains" value="AE=1-112"/>
</dbReference>
<dbReference type="PDB" id="7Q0F">
    <property type="method" value="EM"/>
    <property type="resolution" value="2.64 A"/>
    <property type="chains" value="AE=1-112"/>
</dbReference>
<dbReference type="PDB" id="7Q0P">
    <property type="method" value="EM"/>
    <property type="resolution" value="2.77 A"/>
    <property type="chains" value="AE=1-112"/>
</dbReference>
<dbReference type="PDB" id="7Q0R">
    <property type="method" value="EM"/>
    <property type="resolution" value="2.67 A"/>
    <property type="chains" value="AE=1-112"/>
</dbReference>
<dbReference type="PDB" id="8OGJ">
    <property type="method" value="EM"/>
    <property type="resolution" value="3.10 A"/>
    <property type="chains" value="AE=1-112"/>
</dbReference>
<dbReference type="PDB" id="8OH6">
    <property type="method" value="X-ray"/>
    <property type="resolution" value="3.35 A"/>
    <property type="chains" value="AE/BY=1-112"/>
</dbReference>
<dbReference type="PDB" id="8OI5">
    <property type="method" value="X-ray"/>
    <property type="resolution" value="2.90 A"/>
    <property type="chains" value="AE/BY=1-112"/>
</dbReference>
<dbReference type="PDB" id="8OJ3">
    <property type="method" value="X-ray"/>
    <property type="resolution" value="3.50 A"/>
    <property type="chains" value="AE/BY=1-112"/>
</dbReference>
<dbReference type="PDBsum" id="7PZY"/>
<dbReference type="PDBsum" id="7Q08"/>
<dbReference type="PDBsum" id="7Q0F"/>
<dbReference type="PDBsum" id="7Q0P"/>
<dbReference type="PDBsum" id="7Q0R"/>
<dbReference type="PDBsum" id="8OGJ"/>
<dbReference type="PDBsum" id="8OH6"/>
<dbReference type="PDBsum" id="8OI5"/>
<dbReference type="PDBsum" id="8OJ3"/>
<dbReference type="SMR" id="A0A1D8PHF5"/>
<dbReference type="FunCoup" id="A0A1D8PHF5">
    <property type="interactions" value="962"/>
</dbReference>
<dbReference type="STRING" id="237561.A0A1D8PHF5"/>
<dbReference type="EnsemblFungi" id="C2_05410W_A-T">
    <property type="protein sequence ID" value="C2_05410W_A-T-p1"/>
    <property type="gene ID" value="C2_05410W_A"/>
</dbReference>
<dbReference type="GeneID" id="30515120"/>
<dbReference type="KEGG" id="cal:CAALFM_C205410WA"/>
<dbReference type="CGD" id="CAL0000188731">
    <property type="gene designation" value="orf19.3572.3"/>
</dbReference>
<dbReference type="VEuPathDB" id="FungiDB:C2_05410W_A"/>
<dbReference type="eggNOG" id="KOG0893">
    <property type="taxonomic scope" value="Eukaryota"/>
</dbReference>
<dbReference type="InParanoid" id="A0A1D8PHF5"/>
<dbReference type="OMA" id="EVWKQGI"/>
<dbReference type="OrthoDB" id="9739313at2759"/>
<dbReference type="Proteomes" id="UP000000559">
    <property type="component" value="Chromosome 2"/>
</dbReference>
<dbReference type="GO" id="GO:0022625">
    <property type="term" value="C:cytosolic large ribosomal subunit"/>
    <property type="evidence" value="ECO:0000318"/>
    <property type="project" value="GO_Central"/>
</dbReference>
<dbReference type="GO" id="GO:0030684">
    <property type="term" value="C:preribosome"/>
    <property type="evidence" value="ECO:0007669"/>
    <property type="project" value="EnsemblFungi"/>
</dbReference>
<dbReference type="GO" id="GO:0003735">
    <property type="term" value="F:structural constituent of ribosome"/>
    <property type="evidence" value="ECO:0000318"/>
    <property type="project" value="GO_Central"/>
</dbReference>
<dbReference type="GO" id="GO:0002181">
    <property type="term" value="P:cytoplasmic translation"/>
    <property type="evidence" value="ECO:0000318"/>
    <property type="project" value="GO_Central"/>
</dbReference>
<dbReference type="CDD" id="cd00463">
    <property type="entry name" value="Ribosomal_L31e"/>
    <property type="match status" value="1"/>
</dbReference>
<dbReference type="FunFam" id="3.10.440.10:FF:000001">
    <property type="entry name" value="60S ribosomal protein L31"/>
    <property type="match status" value="1"/>
</dbReference>
<dbReference type="Gene3D" id="3.10.440.10">
    <property type="match status" value="1"/>
</dbReference>
<dbReference type="InterPro" id="IPR000054">
    <property type="entry name" value="Ribosomal_eL31"/>
</dbReference>
<dbReference type="InterPro" id="IPR020052">
    <property type="entry name" value="Ribosomal_eL31_CS"/>
</dbReference>
<dbReference type="InterPro" id="IPR023621">
    <property type="entry name" value="Ribosomal_eL31_dom_sf"/>
</dbReference>
<dbReference type="PANTHER" id="PTHR10956">
    <property type="entry name" value="60S RIBOSOMAL PROTEIN L31"/>
    <property type="match status" value="1"/>
</dbReference>
<dbReference type="PANTHER" id="PTHR10956:SF0">
    <property type="entry name" value="60S RIBOSOMAL PROTEIN L31"/>
    <property type="match status" value="1"/>
</dbReference>
<dbReference type="Pfam" id="PF01198">
    <property type="entry name" value="Ribosomal_L31e"/>
    <property type="match status" value="1"/>
</dbReference>
<dbReference type="SMART" id="SM01380">
    <property type="entry name" value="Ribosomal_L31e"/>
    <property type="match status" value="1"/>
</dbReference>
<dbReference type="SUPFAM" id="SSF54575">
    <property type="entry name" value="Ribosomal protein L31e"/>
    <property type="match status" value="1"/>
</dbReference>
<dbReference type="PROSITE" id="PS01144">
    <property type="entry name" value="RIBOSOMAL_L31E"/>
    <property type="match status" value="1"/>
</dbReference>
<proteinExistence type="evidence at protein level"/>
<name>RL31B_CANAL</name>
<comment type="function">
    <text evidence="4">Component of the ribosome, a large ribonucleoprotein complex responsible for the synthesis of proteins in the cell. The small ribosomal subunit (SSU) binds messenger RNAs (mRNAs) and translates the encoded message by selecting cognate aminoacyl-transfer RNA (tRNA) molecules. The large subunit (LSU) contains the ribosomal catalytic site termed the peptidyl transferase center (PTC), which catalyzes the formation of peptide bonds, thereby polymerizing the amino acids delivered by tRNAs into a polypeptide chain. The nascent polypeptides leave the ribosome through a tunnel in the LSU and interact with protein factors that function in enzymatic processing, targeting, and the membrane insertion of nascent chains at the exit of the ribosomal tunnel.</text>
</comment>
<comment type="subunit">
    <text evidence="1">Component of the large ribosomal subunit (PubMed:35613268). Mature ribosomes consist of a small (40S) and a large (60S) subunit (PubMed:35613268). The 40S subunit contains about 32 different proteins and 1 molecule of RNA (18S) (PubMed:35613268). The 60S subunit contains 45 different proteins and 3 molecules of RNA (25S, 5.8S and 5S) (PubMed:35613268).</text>
</comment>
<comment type="subcellular location">
    <subcellularLocation>
        <location evidence="4">Cytoplasm</location>
    </subcellularLocation>
</comment>
<comment type="similarity">
    <text evidence="3">Belongs to the eukaryotic ribosomal protein eL31 family.</text>
</comment>
<feature type="chain" id="PRO_0000456508" description="Large ribosomal subunit protein eL31">
    <location>
        <begin position="1"/>
        <end position="112"/>
    </location>
</feature>
<keyword id="KW-0002">3D-structure</keyword>
<keyword id="KW-0963">Cytoplasm</keyword>
<keyword id="KW-1185">Reference proteome</keyword>
<keyword id="KW-0687">Ribonucleoprotein</keyword>
<keyword id="KW-0689">Ribosomal protein</keyword>
<organism>
    <name type="scientific">Candida albicans (strain SC5314 / ATCC MYA-2876)</name>
    <name type="common">Yeast</name>
    <dbReference type="NCBI Taxonomy" id="237561"/>
    <lineage>
        <taxon>Eukaryota</taxon>
        <taxon>Fungi</taxon>
        <taxon>Dikarya</taxon>
        <taxon>Ascomycota</taxon>
        <taxon>Saccharomycotina</taxon>
        <taxon>Pichiomycetes</taxon>
        <taxon>Debaryomycetaceae</taxon>
        <taxon>Candida/Lodderomyces clade</taxon>
        <taxon>Candida</taxon>
    </lineage>
</organism>
<sequence length="112" mass="12967">MALQDVVTREYTINLHKRLHGVNFKKRAPKAVKEIKKFATLHMGTTDVRLDPKLNIAIWKRGVQGVENRMRLRISRKRNDEEDAKEKLFAYVEPVIVPSTKGLQTVVVEDDE</sequence>
<protein>
    <recommendedName>
        <fullName evidence="2">Large ribosomal subunit protein eL31</fullName>
    </recommendedName>
    <alternativeName>
        <fullName>60S ribosomal protein L31-B</fullName>
    </alternativeName>
</protein>
<gene>
    <name evidence="2" type="primary">RPL31B</name>
    <name type="ordered locus">orf19.3572.3</name>
    <name type="ORF">CAALFM_C205410WA</name>
</gene>
<reference key="1">
    <citation type="journal article" date="2004" name="Proc. Natl. Acad. Sci. U.S.A.">
        <title>The diploid genome sequence of Candida albicans.</title>
        <authorList>
            <person name="Jones T."/>
            <person name="Federspiel N.A."/>
            <person name="Chibana H."/>
            <person name="Dungan J."/>
            <person name="Kalman S."/>
            <person name="Magee B.B."/>
            <person name="Newport G."/>
            <person name="Thorstenson Y.R."/>
            <person name="Agabian N."/>
            <person name="Magee P.T."/>
            <person name="Davis R.W."/>
            <person name="Scherer S."/>
        </authorList>
    </citation>
    <scope>NUCLEOTIDE SEQUENCE [LARGE SCALE GENOMIC DNA]</scope>
    <source>
        <strain>SC5314 / ATCC MYA-2876</strain>
    </source>
</reference>
<reference key="2">
    <citation type="journal article" date="2007" name="Genome Biol.">
        <title>Assembly of the Candida albicans genome into sixteen supercontigs aligned on the eight chromosomes.</title>
        <authorList>
            <person name="van het Hoog M."/>
            <person name="Rast T.J."/>
            <person name="Martchenko M."/>
            <person name="Grindle S."/>
            <person name="Dignard D."/>
            <person name="Hogues H."/>
            <person name="Cuomo C."/>
            <person name="Berriman M."/>
            <person name="Scherer S."/>
            <person name="Magee B.B."/>
            <person name="Whiteway M."/>
            <person name="Chibana H."/>
            <person name="Nantel A."/>
            <person name="Magee P.T."/>
        </authorList>
    </citation>
    <scope>GENOME REANNOTATION</scope>
    <source>
        <strain>SC5314 / ATCC MYA-2876</strain>
    </source>
</reference>
<reference key="3">
    <citation type="journal article" date="2013" name="Genome Biol.">
        <title>Assembly of a phased diploid Candida albicans genome facilitates allele-specific measurements and provides a simple model for repeat and indel structure.</title>
        <authorList>
            <person name="Muzzey D."/>
            <person name="Schwartz K."/>
            <person name="Weissman J.S."/>
            <person name="Sherlock G."/>
        </authorList>
    </citation>
    <scope>NUCLEOTIDE SEQUENCE [LARGE SCALE GENOMIC DNA]</scope>
    <scope>GENOME REANNOTATION</scope>
    <source>
        <strain>SC5314 / ATCC MYA-2876</strain>
    </source>
</reference>
<reference evidence="5 6 7" key="4">
    <citation type="journal article" date="2022" name="Sci. Adv.">
        <title>E-site drug specificity of the human pathogen Candida albicans ribosome.</title>
        <authorList>
            <person name="Zgadzay Y."/>
            <person name="Kolosova O."/>
            <person name="Stetsenko A."/>
            <person name="Wu C."/>
            <person name="Bruchlen D."/>
            <person name="Usachev K."/>
            <person name="Validov S."/>
            <person name="Jenner L."/>
            <person name="Rogachev A."/>
            <person name="Yusupova G."/>
            <person name="Sachs M.S."/>
            <person name="Guskov A."/>
            <person name="Yusupov M."/>
        </authorList>
    </citation>
    <scope>STRUCTURE BY ELECTRON MICROSCOPY (2.32 ANGSTROMS) OF THE 80S RIBOSOME</scope>
    <scope>SUBUNIT</scope>
</reference>
<accession>A0A1D8PHF5</accession>